<name>KLK1_MOUSE</name>
<reference key="1">
    <citation type="journal article" date="1986" name="J. Biol. Chem.">
        <title>Mouse glandular kallikrein genes. Identification, structure, and expression of the renal kallikrein gene.</title>
        <authorList>
            <person name="van Leeuwen B.H."/>
            <person name="Evans B.A."/>
            <person name="Tregear G.W."/>
            <person name="Richards R.I."/>
        </authorList>
    </citation>
    <scope>NUCLEOTIDE SEQUENCE [GENOMIC DNA]</scope>
</reference>
<reference key="2">
    <citation type="submission" date="1991-06" db="EMBL/GenBank/DDBJ databases">
        <title>Identification of a tissue kallikrein gene, mGK-6, expressed in a mouse neuroendocrine cell line.</title>
        <authorList>
            <person name="Tada M."/>
            <person name="Peters J."/>
            <person name="Takahashi S."/>
            <person name="Inoue H."/>
            <person name="Miyake Y."/>
        </authorList>
    </citation>
    <scope>NUCLEOTIDE SEQUENCE [MRNA]</scope>
</reference>
<reference key="3">
    <citation type="journal article" date="2005" name="Science">
        <title>The transcriptional landscape of the mammalian genome.</title>
        <authorList>
            <person name="Carninci P."/>
            <person name="Kasukawa T."/>
            <person name="Katayama S."/>
            <person name="Gough J."/>
            <person name="Frith M.C."/>
            <person name="Maeda N."/>
            <person name="Oyama R."/>
            <person name="Ravasi T."/>
            <person name="Lenhard B."/>
            <person name="Wells C."/>
            <person name="Kodzius R."/>
            <person name="Shimokawa K."/>
            <person name="Bajic V.B."/>
            <person name="Brenner S.E."/>
            <person name="Batalov S."/>
            <person name="Forrest A.R."/>
            <person name="Zavolan M."/>
            <person name="Davis M.J."/>
            <person name="Wilming L.G."/>
            <person name="Aidinis V."/>
            <person name="Allen J.E."/>
            <person name="Ambesi-Impiombato A."/>
            <person name="Apweiler R."/>
            <person name="Aturaliya R.N."/>
            <person name="Bailey T.L."/>
            <person name="Bansal M."/>
            <person name="Baxter L."/>
            <person name="Beisel K.W."/>
            <person name="Bersano T."/>
            <person name="Bono H."/>
            <person name="Chalk A.M."/>
            <person name="Chiu K.P."/>
            <person name="Choudhary V."/>
            <person name="Christoffels A."/>
            <person name="Clutterbuck D.R."/>
            <person name="Crowe M.L."/>
            <person name="Dalla E."/>
            <person name="Dalrymple B.P."/>
            <person name="de Bono B."/>
            <person name="Della Gatta G."/>
            <person name="di Bernardo D."/>
            <person name="Down T."/>
            <person name="Engstrom P."/>
            <person name="Fagiolini M."/>
            <person name="Faulkner G."/>
            <person name="Fletcher C.F."/>
            <person name="Fukushima T."/>
            <person name="Furuno M."/>
            <person name="Futaki S."/>
            <person name="Gariboldi M."/>
            <person name="Georgii-Hemming P."/>
            <person name="Gingeras T.R."/>
            <person name="Gojobori T."/>
            <person name="Green R.E."/>
            <person name="Gustincich S."/>
            <person name="Harbers M."/>
            <person name="Hayashi Y."/>
            <person name="Hensch T.K."/>
            <person name="Hirokawa N."/>
            <person name="Hill D."/>
            <person name="Huminiecki L."/>
            <person name="Iacono M."/>
            <person name="Ikeo K."/>
            <person name="Iwama A."/>
            <person name="Ishikawa T."/>
            <person name="Jakt M."/>
            <person name="Kanapin A."/>
            <person name="Katoh M."/>
            <person name="Kawasawa Y."/>
            <person name="Kelso J."/>
            <person name="Kitamura H."/>
            <person name="Kitano H."/>
            <person name="Kollias G."/>
            <person name="Krishnan S.P."/>
            <person name="Kruger A."/>
            <person name="Kummerfeld S.K."/>
            <person name="Kurochkin I.V."/>
            <person name="Lareau L.F."/>
            <person name="Lazarevic D."/>
            <person name="Lipovich L."/>
            <person name="Liu J."/>
            <person name="Liuni S."/>
            <person name="McWilliam S."/>
            <person name="Madan Babu M."/>
            <person name="Madera M."/>
            <person name="Marchionni L."/>
            <person name="Matsuda H."/>
            <person name="Matsuzawa S."/>
            <person name="Miki H."/>
            <person name="Mignone F."/>
            <person name="Miyake S."/>
            <person name="Morris K."/>
            <person name="Mottagui-Tabar S."/>
            <person name="Mulder N."/>
            <person name="Nakano N."/>
            <person name="Nakauchi H."/>
            <person name="Ng P."/>
            <person name="Nilsson R."/>
            <person name="Nishiguchi S."/>
            <person name="Nishikawa S."/>
            <person name="Nori F."/>
            <person name="Ohara O."/>
            <person name="Okazaki Y."/>
            <person name="Orlando V."/>
            <person name="Pang K.C."/>
            <person name="Pavan W.J."/>
            <person name="Pavesi G."/>
            <person name="Pesole G."/>
            <person name="Petrovsky N."/>
            <person name="Piazza S."/>
            <person name="Reed J."/>
            <person name="Reid J.F."/>
            <person name="Ring B.Z."/>
            <person name="Ringwald M."/>
            <person name="Rost B."/>
            <person name="Ruan Y."/>
            <person name="Salzberg S.L."/>
            <person name="Sandelin A."/>
            <person name="Schneider C."/>
            <person name="Schoenbach C."/>
            <person name="Sekiguchi K."/>
            <person name="Semple C.A."/>
            <person name="Seno S."/>
            <person name="Sessa L."/>
            <person name="Sheng Y."/>
            <person name="Shibata Y."/>
            <person name="Shimada H."/>
            <person name="Shimada K."/>
            <person name="Silva D."/>
            <person name="Sinclair B."/>
            <person name="Sperling S."/>
            <person name="Stupka E."/>
            <person name="Sugiura K."/>
            <person name="Sultana R."/>
            <person name="Takenaka Y."/>
            <person name="Taki K."/>
            <person name="Tammoja K."/>
            <person name="Tan S.L."/>
            <person name="Tang S."/>
            <person name="Taylor M.S."/>
            <person name="Tegner J."/>
            <person name="Teichmann S.A."/>
            <person name="Ueda H.R."/>
            <person name="van Nimwegen E."/>
            <person name="Verardo R."/>
            <person name="Wei C.L."/>
            <person name="Yagi K."/>
            <person name="Yamanishi H."/>
            <person name="Zabarovsky E."/>
            <person name="Zhu S."/>
            <person name="Zimmer A."/>
            <person name="Hide W."/>
            <person name="Bult C."/>
            <person name="Grimmond S.M."/>
            <person name="Teasdale R.D."/>
            <person name="Liu E.T."/>
            <person name="Brusic V."/>
            <person name="Quackenbush J."/>
            <person name="Wahlestedt C."/>
            <person name="Mattick J.S."/>
            <person name="Hume D.A."/>
            <person name="Kai C."/>
            <person name="Sasaki D."/>
            <person name="Tomaru Y."/>
            <person name="Fukuda S."/>
            <person name="Kanamori-Katayama M."/>
            <person name="Suzuki M."/>
            <person name="Aoki J."/>
            <person name="Arakawa T."/>
            <person name="Iida J."/>
            <person name="Imamura K."/>
            <person name="Itoh M."/>
            <person name="Kato T."/>
            <person name="Kawaji H."/>
            <person name="Kawagashira N."/>
            <person name="Kawashima T."/>
            <person name="Kojima M."/>
            <person name="Kondo S."/>
            <person name="Konno H."/>
            <person name="Nakano K."/>
            <person name="Ninomiya N."/>
            <person name="Nishio T."/>
            <person name="Okada M."/>
            <person name="Plessy C."/>
            <person name="Shibata K."/>
            <person name="Shiraki T."/>
            <person name="Suzuki S."/>
            <person name="Tagami M."/>
            <person name="Waki K."/>
            <person name="Watahiki A."/>
            <person name="Okamura-Oho Y."/>
            <person name="Suzuki H."/>
            <person name="Kawai J."/>
            <person name="Hayashizaki Y."/>
        </authorList>
    </citation>
    <scope>NUCLEOTIDE SEQUENCE [LARGE SCALE MRNA]</scope>
    <source>
        <strain>C57BL/6J</strain>
        <tissue>Kidney</tissue>
    </source>
</reference>
<reference key="4">
    <citation type="journal article" date="2004" name="Genome Res.">
        <title>The status, quality, and expansion of the NIH full-length cDNA project: the Mammalian Gene Collection (MGC).</title>
        <authorList>
            <consortium name="The MGC Project Team"/>
        </authorList>
    </citation>
    <scope>NUCLEOTIDE SEQUENCE [LARGE SCALE MRNA]</scope>
    <source>
        <strain>FVB/N</strain>
        <tissue>Colon</tissue>
        <tissue>Kidney</tissue>
        <tissue>Salivary gland</tissue>
    </source>
</reference>
<reference key="5">
    <citation type="journal article" date="1992" name="J. Biochem.">
        <title>mGK-6-derived true tissue kallikrein is synthesized, processed, and targeted through a regulated secretory pathway in mouse pituitary AtT-20 cells.</title>
        <authorList>
            <person name="Peters J."/>
            <person name="Takahashi S."/>
            <person name="Tada M."/>
            <person name="Miyake Y."/>
        </authorList>
    </citation>
    <scope>PROTEIN SEQUENCE OF 25-44</scope>
    <source>
        <tissue>Submandibular gland</tissue>
    </source>
</reference>
<reference key="6">
    <citation type="journal article" date="1989" name="FEBS Lett.">
        <title>A cytocidal tissue kallikrein isolated from mouse submandibular glands.</title>
        <authorList>
            <person name="Murakami K."/>
            <person name="Ikigai H."/>
            <person name="Nagumo N."/>
            <person name="Tomita M."/>
            <person name="Shimamura T."/>
        </authorList>
    </citation>
    <scope>PROTEIN SEQUENCE OF 165-174</scope>
    <source>
        <tissue>Submandibular gland</tissue>
    </source>
</reference>
<reference key="7">
    <citation type="journal article" date="2010" name="Cell">
        <title>A tissue-specific atlas of mouse protein phosphorylation and expression.</title>
        <authorList>
            <person name="Huttlin E.L."/>
            <person name="Jedrychowski M.P."/>
            <person name="Elias J.E."/>
            <person name="Goswami T."/>
            <person name="Rad R."/>
            <person name="Beausoleil S.A."/>
            <person name="Villen J."/>
            <person name="Haas W."/>
            <person name="Sowa M.E."/>
            <person name="Gygi S.P."/>
        </authorList>
    </citation>
    <scope>IDENTIFICATION BY MASS SPECTROMETRY [LARGE SCALE ANALYSIS]</scope>
    <source>
        <tissue>Kidney</tissue>
        <tissue>Pancreas</tissue>
    </source>
</reference>
<accession>P15947</accession>
<accession>Q61855</accession>
<organism>
    <name type="scientific">Mus musculus</name>
    <name type="common">Mouse</name>
    <dbReference type="NCBI Taxonomy" id="10090"/>
    <lineage>
        <taxon>Eukaryota</taxon>
        <taxon>Metazoa</taxon>
        <taxon>Chordata</taxon>
        <taxon>Craniata</taxon>
        <taxon>Vertebrata</taxon>
        <taxon>Euteleostomi</taxon>
        <taxon>Mammalia</taxon>
        <taxon>Eutheria</taxon>
        <taxon>Euarchontoglires</taxon>
        <taxon>Glires</taxon>
        <taxon>Rodentia</taxon>
        <taxon>Myomorpha</taxon>
        <taxon>Muroidea</taxon>
        <taxon>Muridae</taxon>
        <taxon>Murinae</taxon>
        <taxon>Mus</taxon>
        <taxon>Mus</taxon>
    </lineage>
</organism>
<gene>
    <name type="primary">Klk1</name>
    <name type="synonym">Klk-6</name>
    <name type="synonym">Klk6</name>
</gene>
<evidence type="ECO:0000255" key="1">
    <source>
        <dbReference type="PROSITE-ProRule" id="PRU00274"/>
    </source>
</evidence>
<evidence type="ECO:0000269" key="2">
    <source>
    </source>
</evidence>
<evidence type="ECO:0000305" key="3"/>
<keyword id="KW-0903">Direct protein sequencing</keyword>
<keyword id="KW-1015">Disulfide bond</keyword>
<keyword id="KW-0325">Glycoprotein</keyword>
<keyword id="KW-0378">Hydrolase</keyword>
<keyword id="KW-0645">Protease</keyword>
<keyword id="KW-1185">Reference proteome</keyword>
<keyword id="KW-0720">Serine protease</keyword>
<keyword id="KW-0732">Signal</keyword>
<keyword id="KW-0865">Zymogen</keyword>
<dbReference type="EC" id="3.4.21.35"/>
<dbReference type="EMBL" id="M13500">
    <property type="protein sequence ID" value="AAG11389.1"/>
    <property type="molecule type" value="Genomic_DNA"/>
</dbReference>
<dbReference type="EMBL" id="M13498">
    <property type="protein sequence ID" value="AAG11389.1"/>
    <property type="status" value="JOINED"/>
    <property type="molecule type" value="Genomic_DNA"/>
</dbReference>
<dbReference type="EMBL" id="M13499">
    <property type="protein sequence ID" value="AAG11389.1"/>
    <property type="status" value="JOINED"/>
    <property type="molecule type" value="Genomic_DNA"/>
</dbReference>
<dbReference type="EMBL" id="D10464">
    <property type="protein sequence ID" value="BAA01257.1"/>
    <property type="molecule type" value="mRNA"/>
</dbReference>
<dbReference type="EMBL" id="AK002278">
    <property type="protein sequence ID" value="BAB21982.1"/>
    <property type="molecule type" value="mRNA"/>
</dbReference>
<dbReference type="EMBL" id="BC010754">
    <property type="protein sequence ID" value="AAH10754.1"/>
    <property type="molecule type" value="mRNA"/>
</dbReference>
<dbReference type="EMBL" id="BC027736">
    <property type="protein sequence ID" value="AAH27736.1"/>
    <property type="molecule type" value="mRNA"/>
</dbReference>
<dbReference type="EMBL" id="BC053697">
    <property type="protein sequence ID" value="AAH53697.1"/>
    <property type="molecule type" value="mRNA"/>
</dbReference>
<dbReference type="CCDS" id="CCDS21202.1"/>
<dbReference type="PIR" id="A25606">
    <property type="entry name" value="A25606"/>
</dbReference>
<dbReference type="RefSeq" id="NP_001307260.1">
    <property type="nucleotide sequence ID" value="NM_001320331.1"/>
</dbReference>
<dbReference type="RefSeq" id="NP_001307261.1">
    <property type="nucleotide sequence ID" value="NM_001320332.1"/>
</dbReference>
<dbReference type="RefSeq" id="NP_034769.4">
    <property type="nucleotide sequence ID" value="NM_010639.8"/>
</dbReference>
<dbReference type="SMR" id="P15947"/>
<dbReference type="FunCoup" id="P15947">
    <property type="interactions" value="74"/>
</dbReference>
<dbReference type="STRING" id="10090.ENSMUSP00000074659"/>
<dbReference type="MEROPS" id="S01.167"/>
<dbReference type="GlyCosmos" id="P15947">
    <property type="glycosylation" value="1 site, No reported glycans"/>
</dbReference>
<dbReference type="GlyGen" id="P15947">
    <property type="glycosylation" value="1 site"/>
</dbReference>
<dbReference type="PhosphoSitePlus" id="P15947"/>
<dbReference type="jPOST" id="P15947"/>
<dbReference type="PaxDb" id="10090-ENSMUSP00000074659"/>
<dbReference type="PeptideAtlas" id="P15947"/>
<dbReference type="ProteomicsDB" id="263660"/>
<dbReference type="DNASU" id="16612"/>
<dbReference type="Ensembl" id="ENSMUST00000075162.5">
    <property type="protein sequence ID" value="ENSMUSP00000074659.4"/>
    <property type="gene ID" value="ENSMUSG00000063903.6"/>
</dbReference>
<dbReference type="GeneID" id="16612"/>
<dbReference type="KEGG" id="mmu:16612"/>
<dbReference type="UCSC" id="uc009goo.1">
    <property type="organism name" value="mouse"/>
</dbReference>
<dbReference type="AGR" id="MGI:102850"/>
<dbReference type="CTD" id="3816"/>
<dbReference type="MGI" id="MGI:102850">
    <property type="gene designation" value="Klk1"/>
</dbReference>
<dbReference type="VEuPathDB" id="HostDB:ENSMUSG00000063903"/>
<dbReference type="eggNOG" id="KOG3627">
    <property type="taxonomic scope" value="Eukaryota"/>
</dbReference>
<dbReference type="GeneTree" id="ENSGT01020000230389"/>
<dbReference type="HOGENOM" id="CLU_006842_1_1_1"/>
<dbReference type="InParanoid" id="P15947"/>
<dbReference type="OMA" id="FMLCAGQ"/>
<dbReference type="OrthoDB" id="10061449at2759"/>
<dbReference type="PhylomeDB" id="P15947"/>
<dbReference type="TreeFam" id="TF331065"/>
<dbReference type="BRENDA" id="3.4.21.35">
    <property type="organism ID" value="3474"/>
</dbReference>
<dbReference type="BRENDA" id="3.4.21.B10">
    <property type="organism ID" value="3474"/>
</dbReference>
<dbReference type="Reactome" id="R-MMU-1592389">
    <property type="pathway name" value="Activation of Matrix Metalloproteinases"/>
</dbReference>
<dbReference type="BioGRID-ORCS" id="16612">
    <property type="hits" value="1 hit in 47 CRISPR screens"/>
</dbReference>
<dbReference type="ChiTaRS" id="Klk1">
    <property type="organism name" value="mouse"/>
</dbReference>
<dbReference type="PRO" id="PR:P15947"/>
<dbReference type="Proteomes" id="UP000000589">
    <property type="component" value="Chromosome 7"/>
</dbReference>
<dbReference type="RNAct" id="P15947">
    <property type="molecule type" value="protein"/>
</dbReference>
<dbReference type="Bgee" id="ENSMUSG00000063903">
    <property type="expression patterns" value="Expressed in submandibular gland and 82 other cell types or tissues"/>
</dbReference>
<dbReference type="ExpressionAtlas" id="P15947">
    <property type="expression patterns" value="baseline and differential"/>
</dbReference>
<dbReference type="GO" id="GO:0004252">
    <property type="term" value="F:serine-type endopeptidase activity"/>
    <property type="evidence" value="ECO:0007669"/>
    <property type="project" value="UniProtKB-EC"/>
</dbReference>
<dbReference type="GO" id="GO:0006508">
    <property type="term" value="P:proteolysis"/>
    <property type="evidence" value="ECO:0007669"/>
    <property type="project" value="UniProtKB-KW"/>
</dbReference>
<dbReference type="CDD" id="cd00190">
    <property type="entry name" value="Tryp_SPc"/>
    <property type="match status" value="1"/>
</dbReference>
<dbReference type="FunFam" id="2.40.10.10:FF:000032">
    <property type="entry name" value="Kallikrein 1-related peptidase C9"/>
    <property type="match status" value="1"/>
</dbReference>
<dbReference type="FunFam" id="2.40.10.10:FF:000042">
    <property type="entry name" value="Kallikrein 1-related peptidase C9"/>
    <property type="match status" value="1"/>
</dbReference>
<dbReference type="Gene3D" id="2.40.10.10">
    <property type="entry name" value="Trypsin-like serine proteases"/>
    <property type="match status" value="2"/>
</dbReference>
<dbReference type="InterPro" id="IPR009003">
    <property type="entry name" value="Peptidase_S1_PA"/>
</dbReference>
<dbReference type="InterPro" id="IPR043504">
    <property type="entry name" value="Peptidase_S1_PA_chymotrypsin"/>
</dbReference>
<dbReference type="InterPro" id="IPR001314">
    <property type="entry name" value="Peptidase_S1A"/>
</dbReference>
<dbReference type="InterPro" id="IPR001254">
    <property type="entry name" value="Trypsin_dom"/>
</dbReference>
<dbReference type="InterPro" id="IPR018114">
    <property type="entry name" value="TRYPSIN_HIS"/>
</dbReference>
<dbReference type="InterPro" id="IPR033116">
    <property type="entry name" value="TRYPSIN_SER"/>
</dbReference>
<dbReference type="PANTHER" id="PTHR24271:SF47">
    <property type="entry name" value="KALLIKREIN-1"/>
    <property type="match status" value="1"/>
</dbReference>
<dbReference type="PANTHER" id="PTHR24271">
    <property type="entry name" value="KALLIKREIN-RELATED"/>
    <property type="match status" value="1"/>
</dbReference>
<dbReference type="Pfam" id="PF00089">
    <property type="entry name" value="Trypsin"/>
    <property type="match status" value="1"/>
</dbReference>
<dbReference type="PRINTS" id="PR00722">
    <property type="entry name" value="CHYMOTRYPSIN"/>
</dbReference>
<dbReference type="SMART" id="SM00020">
    <property type="entry name" value="Tryp_SPc"/>
    <property type="match status" value="1"/>
</dbReference>
<dbReference type="SUPFAM" id="SSF50494">
    <property type="entry name" value="Trypsin-like serine proteases"/>
    <property type="match status" value="1"/>
</dbReference>
<dbReference type="PROSITE" id="PS50240">
    <property type="entry name" value="TRYPSIN_DOM"/>
    <property type="match status" value="1"/>
</dbReference>
<dbReference type="PROSITE" id="PS00134">
    <property type="entry name" value="TRYPSIN_HIS"/>
    <property type="match status" value="1"/>
</dbReference>
<dbReference type="PROSITE" id="PS00135">
    <property type="entry name" value="TRYPSIN_SER"/>
    <property type="match status" value="1"/>
</dbReference>
<comment type="function">
    <text>Glandular kallikreins cleave Met-Lys and Arg-Ser bonds in kininogen to release Lys-bradykinin.</text>
</comment>
<comment type="catalytic activity">
    <reaction>
        <text>Preferential cleavage of Arg-|-Xaa bonds in small molecule substrates. Highly selective action to release kallidin (lysyl-bradykinin) from kininogen involves hydrolysis of Met-|-Xaa or Leu-|-Xaa.</text>
        <dbReference type="EC" id="3.4.21.35"/>
    </reaction>
</comment>
<comment type="similarity">
    <text evidence="1">Belongs to the peptidase S1 family. Kallikrein subfamily.</text>
</comment>
<sequence length="261" mass="28775">MRFLILFLALSLGGIDAAPPVQSRIVGGFNCEKNSQPWQVAVYRFTKYQCGGILLNANWVLTAAHCHNDKYQVWLGKNNFLEDEPSAQHRLVSKAIPHPDFNMSLLNEHTPQPEDDYSNDLMLLRLKKPADITDVVKPIDLPTEEPKLGSTCLASGWGSITPVKYEYPDELQCVNLKLLPNEDCAKAHIEKVTDDMLCAGDMDGGKDTCAGDSGGPLICDGVLQGITSWGPSPCGKPNVPGIYTRVLNFNTWIRETMAEND</sequence>
<protein>
    <recommendedName>
        <fullName>Kallikrein-1</fullName>
        <ecNumber>3.4.21.35</ecNumber>
    </recommendedName>
    <alternativeName>
        <fullName>Glandular kallikrein K1</fullName>
    </alternativeName>
    <alternativeName>
        <fullName>KAL-B</fullName>
    </alternativeName>
    <alternativeName>
        <fullName>Renal kallikrein</fullName>
    </alternativeName>
    <alternativeName>
        <fullName>Tissue kallikrein-6</fullName>
        <shortName>mGK-6</shortName>
    </alternativeName>
</protein>
<proteinExistence type="evidence at protein level"/>
<feature type="signal peptide" evidence="3">
    <location>
        <begin position="1"/>
        <end position="18"/>
    </location>
</feature>
<feature type="propeptide" id="PRO_0000027975" description="Activation peptide" evidence="2">
    <location>
        <begin position="19"/>
        <end position="24"/>
    </location>
</feature>
<feature type="chain" id="PRO_0000027976" description="Kallikrein-1">
    <location>
        <begin position="25"/>
        <end position="261"/>
    </location>
</feature>
<feature type="domain" description="Peptidase S1" evidence="1">
    <location>
        <begin position="25"/>
        <end position="258"/>
    </location>
</feature>
<feature type="active site" description="Charge relay system">
    <location>
        <position position="65"/>
    </location>
</feature>
<feature type="active site" description="Charge relay system">
    <location>
        <position position="120"/>
    </location>
</feature>
<feature type="active site" description="Charge relay system">
    <location>
        <position position="213"/>
    </location>
</feature>
<feature type="glycosylation site" description="N-linked (GlcNAc...) asparagine" evidence="3">
    <location>
        <position position="102"/>
    </location>
</feature>
<feature type="disulfide bond" evidence="1">
    <location>
        <begin position="31"/>
        <end position="173"/>
    </location>
</feature>
<feature type="disulfide bond" evidence="1">
    <location>
        <begin position="50"/>
        <end position="66"/>
    </location>
</feature>
<feature type="disulfide bond" evidence="1">
    <location>
        <begin position="152"/>
        <end position="219"/>
    </location>
</feature>
<feature type="disulfide bond" evidence="1">
    <location>
        <begin position="184"/>
        <end position="198"/>
    </location>
</feature>
<feature type="disulfide bond" evidence="1">
    <location>
        <begin position="209"/>
        <end position="234"/>
    </location>
</feature>
<feature type="sequence conflict" description="In Ref. 1; AAG11389." evidence="3" ref="1">
    <original>A</original>
    <variation>V</variation>
    <location>
        <position position="57"/>
    </location>
</feature>